<sequence length="313" mass="34878">MMENYKHTTVLLDEAVNGLNIRPDGIYIDGTFGRGGHSRLILSQLGEEGRLLAIDRDPQAIAVAKTIDDPRFSIIHGPFSALGEYVAERDLIGKIDGILLDLGVSSPQLDDAERGFSFMRDGPLDMRMDPTRGQSAAEWLQTAEEADIAWVLKTYGEERFAKRIARAIVERNREQPMTRTKELAEVVAAATPVKDKFKHPATRTFQAVRIWVNSELEEIEQALKSSLNVLAPGGRLSIISFHSLEDRIVKRFMRENSRGPQVPAGLPMTEEQLKKLGGRQLRALGKLMPGEEEVAENPRARSSVLRIAERTNA</sequence>
<name>RSMH_ECOLC</name>
<dbReference type="EC" id="2.1.1.199" evidence="1"/>
<dbReference type="EMBL" id="CP000946">
    <property type="protein sequence ID" value="ACA79189.1"/>
    <property type="molecule type" value="Genomic_DNA"/>
</dbReference>
<dbReference type="RefSeq" id="WP_000970479.1">
    <property type="nucleotide sequence ID" value="NZ_MTFT01000035.1"/>
</dbReference>
<dbReference type="SMR" id="B1IR96"/>
<dbReference type="GeneID" id="86862592"/>
<dbReference type="KEGG" id="ecl:EcolC_3575"/>
<dbReference type="HOGENOM" id="CLU_038422_2_0_6"/>
<dbReference type="GO" id="GO:0005737">
    <property type="term" value="C:cytoplasm"/>
    <property type="evidence" value="ECO:0007669"/>
    <property type="project" value="UniProtKB-SubCell"/>
</dbReference>
<dbReference type="GO" id="GO:0071424">
    <property type="term" value="F:rRNA (cytosine-N4-)-methyltransferase activity"/>
    <property type="evidence" value="ECO:0007669"/>
    <property type="project" value="UniProtKB-UniRule"/>
</dbReference>
<dbReference type="GO" id="GO:0070475">
    <property type="term" value="P:rRNA base methylation"/>
    <property type="evidence" value="ECO:0007669"/>
    <property type="project" value="UniProtKB-UniRule"/>
</dbReference>
<dbReference type="FunFam" id="1.10.150.170:FF:000001">
    <property type="entry name" value="Ribosomal RNA small subunit methyltransferase H"/>
    <property type="match status" value="1"/>
</dbReference>
<dbReference type="Gene3D" id="1.10.150.170">
    <property type="entry name" value="Putative methyltransferase TM0872, insert domain"/>
    <property type="match status" value="1"/>
</dbReference>
<dbReference type="Gene3D" id="3.40.50.150">
    <property type="entry name" value="Vaccinia Virus protein VP39"/>
    <property type="match status" value="1"/>
</dbReference>
<dbReference type="HAMAP" id="MF_01007">
    <property type="entry name" value="16SrRNA_methyltr_H"/>
    <property type="match status" value="1"/>
</dbReference>
<dbReference type="InterPro" id="IPR002903">
    <property type="entry name" value="RsmH"/>
</dbReference>
<dbReference type="InterPro" id="IPR023397">
    <property type="entry name" value="SAM-dep_MeTrfase_MraW_recog"/>
</dbReference>
<dbReference type="InterPro" id="IPR029063">
    <property type="entry name" value="SAM-dependent_MTases_sf"/>
</dbReference>
<dbReference type="NCBIfam" id="TIGR00006">
    <property type="entry name" value="16S rRNA (cytosine(1402)-N(4))-methyltransferase RsmH"/>
    <property type="match status" value="1"/>
</dbReference>
<dbReference type="PANTHER" id="PTHR11265:SF0">
    <property type="entry name" value="12S RRNA N4-METHYLCYTIDINE METHYLTRANSFERASE"/>
    <property type="match status" value="1"/>
</dbReference>
<dbReference type="PANTHER" id="PTHR11265">
    <property type="entry name" value="S-ADENOSYL-METHYLTRANSFERASE MRAW"/>
    <property type="match status" value="1"/>
</dbReference>
<dbReference type="Pfam" id="PF01795">
    <property type="entry name" value="Methyltransf_5"/>
    <property type="match status" value="1"/>
</dbReference>
<dbReference type="PIRSF" id="PIRSF004486">
    <property type="entry name" value="MraW"/>
    <property type="match status" value="1"/>
</dbReference>
<dbReference type="SUPFAM" id="SSF81799">
    <property type="entry name" value="Putative methyltransferase TM0872, insert domain"/>
    <property type="match status" value="1"/>
</dbReference>
<dbReference type="SUPFAM" id="SSF53335">
    <property type="entry name" value="S-adenosyl-L-methionine-dependent methyltransferases"/>
    <property type="match status" value="1"/>
</dbReference>
<organism>
    <name type="scientific">Escherichia coli (strain ATCC 8739 / DSM 1576 / NBRC 3972 / NCIMB 8545 / WDCM 00012 / Crooks)</name>
    <dbReference type="NCBI Taxonomy" id="481805"/>
    <lineage>
        <taxon>Bacteria</taxon>
        <taxon>Pseudomonadati</taxon>
        <taxon>Pseudomonadota</taxon>
        <taxon>Gammaproteobacteria</taxon>
        <taxon>Enterobacterales</taxon>
        <taxon>Enterobacteriaceae</taxon>
        <taxon>Escherichia</taxon>
    </lineage>
</organism>
<evidence type="ECO:0000255" key="1">
    <source>
        <dbReference type="HAMAP-Rule" id="MF_01007"/>
    </source>
</evidence>
<reference key="1">
    <citation type="submission" date="2008-02" db="EMBL/GenBank/DDBJ databases">
        <title>Complete sequence of Escherichia coli C str. ATCC 8739.</title>
        <authorList>
            <person name="Copeland A."/>
            <person name="Lucas S."/>
            <person name="Lapidus A."/>
            <person name="Glavina del Rio T."/>
            <person name="Dalin E."/>
            <person name="Tice H."/>
            <person name="Bruce D."/>
            <person name="Goodwin L."/>
            <person name="Pitluck S."/>
            <person name="Kiss H."/>
            <person name="Brettin T."/>
            <person name="Detter J.C."/>
            <person name="Han C."/>
            <person name="Kuske C.R."/>
            <person name="Schmutz J."/>
            <person name="Larimer F."/>
            <person name="Land M."/>
            <person name="Hauser L."/>
            <person name="Kyrpides N."/>
            <person name="Mikhailova N."/>
            <person name="Ingram L."/>
            <person name="Richardson P."/>
        </authorList>
    </citation>
    <scope>NUCLEOTIDE SEQUENCE [LARGE SCALE GENOMIC DNA]</scope>
    <source>
        <strain>ATCC 8739 / DSM 1576 / NBRC 3972 / NCIMB 8545 / WDCM 00012 / Crooks</strain>
    </source>
</reference>
<protein>
    <recommendedName>
        <fullName evidence="1">Ribosomal RNA small subunit methyltransferase H</fullName>
        <ecNumber evidence="1">2.1.1.199</ecNumber>
    </recommendedName>
    <alternativeName>
        <fullName evidence="1">16S rRNA m(4)C1402 methyltransferase</fullName>
    </alternativeName>
    <alternativeName>
        <fullName evidence="1">rRNA (cytosine-N(4)-)-methyltransferase RsmH</fullName>
    </alternativeName>
</protein>
<keyword id="KW-0963">Cytoplasm</keyword>
<keyword id="KW-0489">Methyltransferase</keyword>
<keyword id="KW-0698">rRNA processing</keyword>
<keyword id="KW-0949">S-adenosyl-L-methionine</keyword>
<keyword id="KW-0808">Transferase</keyword>
<proteinExistence type="inferred from homology"/>
<accession>B1IR96</accession>
<feature type="chain" id="PRO_0000386868" description="Ribosomal RNA small subunit methyltransferase H">
    <location>
        <begin position="1"/>
        <end position="313"/>
    </location>
</feature>
<feature type="binding site" evidence="1">
    <location>
        <begin position="35"/>
        <end position="37"/>
    </location>
    <ligand>
        <name>S-adenosyl-L-methionine</name>
        <dbReference type="ChEBI" id="CHEBI:59789"/>
    </ligand>
</feature>
<feature type="binding site" evidence="1">
    <location>
        <position position="55"/>
    </location>
    <ligand>
        <name>S-adenosyl-L-methionine</name>
        <dbReference type="ChEBI" id="CHEBI:59789"/>
    </ligand>
</feature>
<feature type="binding site" evidence="1">
    <location>
        <position position="79"/>
    </location>
    <ligand>
        <name>S-adenosyl-L-methionine</name>
        <dbReference type="ChEBI" id="CHEBI:59789"/>
    </ligand>
</feature>
<feature type="binding site" evidence="1">
    <location>
        <position position="101"/>
    </location>
    <ligand>
        <name>S-adenosyl-L-methionine</name>
        <dbReference type="ChEBI" id="CHEBI:59789"/>
    </ligand>
</feature>
<feature type="binding site" evidence="1">
    <location>
        <position position="108"/>
    </location>
    <ligand>
        <name>S-adenosyl-L-methionine</name>
        <dbReference type="ChEBI" id="CHEBI:59789"/>
    </ligand>
</feature>
<gene>
    <name evidence="1" type="primary">rsmH</name>
    <name type="synonym">mraW</name>
    <name type="ordered locus">EcolC_3575</name>
</gene>
<comment type="function">
    <text evidence="1">Specifically methylates the N4 position of cytidine in position 1402 (C1402) of 16S rRNA.</text>
</comment>
<comment type="catalytic activity">
    <reaction evidence="1">
        <text>cytidine(1402) in 16S rRNA + S-adenosyl-L-methionine = N(4)-methylcytidine(1402) in 16S rRNA + S-adenosyl-L-homocysteine + H(+)</text>
        <dbReference type="Rhea" id="RHEA:42928"/>
        <dbReference type="Rhea" id="RHEA-COMP:10286"/>
        <dbReference type="Rhea" id="RHEA-COMP:10287"/>
        <dbReference type="ChEBI" id="CHEBI:15378"/>
        <dbReference type="ChEBI" id="CHEBI:57856"/>
        <dbReference type="ChEBI" id="CHEBI:59789"/>
        <dbReference type="ChEBI" id="CHEBI:74506"/>
        <dbReference type="ChEBI" id="CHEBI:82748"/>
        <dbReference type="EC" id="2.1.1.199"/>
    </reaction>
</comment>
<comment type="subcellular location">
    <subcellularLocation>
        <location evidence="1">Cytoplasm</location>
    </subcellularLocation>
</comment>
<comment type="similarity">
    <text evidence="1">Belongs to the methyltransferase superfamily. RsmH family.</text>
</comment>